<comment type="function">
    <text evidence="1">Isomerase that catalyzes the conversion of deoxy-ribose 1-phosphate (dRib-1-P) and ribose 1-phosphate (Rib-1-P) to deoxy-ribose 5-phosphate (dRib-5-P) and ribose 5-phosphate (Rib-5-P), respectively.</text>
</comment>
<comment type="catalytic activity">
    <reaction evidence="1">
        <text>2-deoxy-alpha-D-ribose 1-phosphate = 2-deoxy-D-ribose 5-phosphate</text>
        <dbReference type="Rhea" id="RHEA:27658"/>
        <dbReference type="ChEBI" id="CHEBI:57259"/>
        <dbReference type="ChEBI" id="CHEBI:62877"/>
        <dbReference type="EC" id="5.4.2.7"/>
    </reaction>
</comment>
<comment type="catalytic activity">
    <reaction evidence="1">
        <text>alpha-D-ribose 1-phosphate = D-ribose 5-phosphate</text>
        <dbReference type="Rhea" id="RHEA:18793"/>
        <dbReference type="ChEBI" id="CHEBI:57720"/>
        <dbReference type="ChEBI" id="CHEBI:78346"/>
        <dbReference type="EC" id="5.4.2.7"/>
    </reaction>
</comment>
<comment type="cofactor">
    <cofactor evidence="1">
        <name>Mn(2+)</name>
        <dbReference type="ChEBI" id="CHEBI:29035"/>
    </cofactor>
    <text evidence="1">Binds 2 manganese ions.</text>
</comment>
<comment type="pathway">
    <text evidence="1">Carbohydrate degradation; 2-deoxy-D-ribose 1-phosphate degradation; D-glyceraldehyde 3-phosphate and acetaldehyde from 2-deoxy-alpha-D-ribose 1-phosphate: step 1/2.</text>
</comment>
<comment type="subcellular location">
    <subcellularLocation>
        <location evidence="1">Cytoplasm</location>
    </subcellularLocation>
</comment>
<comment type="similarity">
    <text evidence="1">Belongs to the phosphopentomutase family.</text>
</comment>
<proteinExistence type="inferred from homology"/>
<organism>
    <name type="scientific">Alkaliphilus oremlandii (strain OhILAs)</name>
    <name type="common">Clostridium oremlandii (strain OhILAs)</name>
    <dbReference type="NCBI Taxonomy" id="350688"/>
    <lineage>
        <taxon>Bacteria</taxon>
        <taxon>Bacillati</taxon>
        <taxon>Bacillota</taxon>
        <taxon>Clostridia</taxon>
        <taxon>Peptostreptococcales</taxon>
        <taxon>Natronincolaceae</taxon>
        <taxon>Alkaliphilus</taxon>
    </lineage>
</organism>
<keyword id="KW-0963">Cytoplasm</keyword>
<keyword id="KW-0413">Isomerase</keyword>
<keyword id="KW-0464">Manganese</keyword>
<keyword id="KW-0479">Metal-binding</keyword>
<keyword id="KW-1185">Reference proteome</keyword>
<sequence>MMNRVILFIMDSVGIGALPDAEQFGDLGANTLGNIALQENGIDLPNLQKLGLGNIDGIVGIEPVESPLGAFGKSLEVSNGKDTTTGHWEIAGIHLKEPFKTFPNGFPEDVINEIERKIGRKTLGNKAASGTVILDELGEEHMRTGSPIIYTSADSVLQIAAHEEVISLDELYKICGIAREIMMGDNAVARIIARPFIGSVGNFSRTPNRRDFSLDPSGDTVLDIAKREGFDVIAVGKIEDIFNGRGITEAVHTVDNMDGINKTIEYIEKQNKGIIFTNLVDFDSMYGHRRDPKGYKRALEDLDKRIPEILESMRDDDIIIFTADHGNDPTYKGSDHTREYIPLVIYGKKVKANTNIGIRKSFADIAATISDILEIPSTNKGESFKNSIIK</sequence>
<name>DEOB_ALKOO</name>
<reference key="1">
    <citation type="submission" date="2007-10" db="EMBL/GenBank/DDBJ databases">
        <title>Complete genome of Alkaliphilus oremlandii OhILAs.</title>
        <authorList>
            <person name="Copeland A."/>
            <person name="Lucas S."/>
            <person name="Lapidus A."/>
            <person name="Barry K."/>
            <person name="Detter J.C."/>
            <person name="Glavina del Rio T."/>
            <person name="Hammon N."/>
            <person name="Israni S."/>
            <person name="Dalin E."/>
            <person name="Tice H."/>
            <person name="Pitluck S."/>
            <person name="Chain P."/>
            <person name="Malfatti S."/>
            <person name="Shin M."/>
            <person name="Vergez L."/>
            <person name="Schmutz J."/>
            <person name="Larimer F."/>
            <person name="Land M."/>
            <person name="Hauser L."/>
            <person name="Kyrpides N."/>
            <person name="Mikhailova N."/>
            <person name="Stolz J.F."/>
            <person name="Dawson A."/>
            <person name="Fisher E."/>
            <person name="Crable B."/>
            <person name="Perera E."/>
            <person name="Lisak J."/>
            <person name="Ranganathan M."/>
            <person name="Basu P."/>
            <person name="Richardson P."/>
        </authorList>
    </citation>
    <scope>NUCLEOTIDE SEQUENCE [LARGE SCALE GENOMIC DNA]</scope>
    <source>
        <strain>OhILAs</strain>
    </source>
</reference>
<dbReference type="EC" id="5.4.2.7" evidence="1"/>
<dbReference type="EMBL" id="CP000853">
    <property type="protein sequence ID" value="ABW19135.1"/>
    <property type="molecule type" value="Genomic_DNA"/>
</dbReference>
<dbReference type="RefSeq" id="WP_012159447.1">
    <property type="nucleotide sequence ID" value="NC_009922.1"/>
</dbReference>
<dbReference type="SMR" id="A8MFH2"/>
<dbReference type="STRING" id="350688.Clos_1592"/>
<dbReference type="KEGG" id="aoe:Clos_1592"/>
<dbReference type="eggNOG" id="COG1015">
    <property type="taxonomic scope" value="Bacteria"/>
</dbReference>
<dbReference type="HOGENOM" id="CLU_053861_0_0_9"/>
<dbReference type="OrthoDB" id="9769930at2"/>
<dbReference type="UniPathway" id="UPA00002">
    <property type="reaction ID" value="UER00467"/>
</dbReference>
<dbReference type="Proteomes" id="UP000000269">
    <property type="component" value="Chromosome"/>
</dbReference>
<dbReference type="GO" id="GO:0005829">
    <property type="term" value="C:cytosol"/>
    <property type="evidence" value="ECO:0007669"/>
    <property type="project" value="TreeGrafter"/>
</dbReference>
<dbReference type="GO" id="GO:0000287">
    <property type="term" value="F:magnesium ion binding"/>
    <property type="evidence" value="ECO:0007669"/>
    <property type="project" value="InterPro"/>
</dbReference>
<dbReference type="GO" id="GO:0030145">
    <property type="term" value="F:manganese ion binding"/>
    <property type="evidence" value="ECO:0007669"/>
    <property type="project" value="UniProtKB-UniRule"/>
</dbReference>
<dbReference type="GO" id="GO:0008973">
    <property type="term" value="F:phosphopentomutase activity"/>
    <property type="evidence" value="ECO:0007669"/>
    <property type="project" value="UniProtKB-UniRule"/>
</dbReference>
<dbReference type="GO" id="GO:0006018">
    <property type="term" value="P:2-deoxyribose 1-phosphate catabolic process"/>
    <property type="evidence" value="ECO:0007669"/>
    <property type="project" value="UniProtKB-UniRule"/>
</dbReference>
<dbReference type="GO" id="GO:0006015">
    <property type="term" value="P:5-phosphoribose 1-diphosphate biosynthetic process"/>
    <property type="evidence" value="ECO:0007669"/>
    <property type="project" value="UniProtKB-UniPathway"/>
</dbReference>
<dbReference type="GO" id="GO:0043094">
    <property type="term" value="P:metabolic compound salvage"/>
    <property type="evidence" value="ECO:0007669"/>
    <property type="project" value="InterPro"/>
</dbReference>
<dbReference type="GO" id="GO:0009117">
    <property type="term" value="P:nucleotide metabolic process"/>
    <property type="evidence" value="ECO:0007669"/>
    <property type="project" value="InterPro"/>
</dbReference>
<dbReference type="CDD" id="cd16009">
    <property type="entry name" value="PPM"/>
    <property type="match status" value="1"/>
</dbReference>
<dbReference type="FunFam" id="3.30.70.1250:FF:000001">
    <property type="entry name" value="Phosphopentomutase"/>
    <property type="match status" value="1"/>
</dbReference>
<dbReference type="Gene3D" id="3.40.720.10">
    <property type="entry name" value="Alkaline Phosphatase, subunit A"/>
    <property type="match status" value="1"/>
</dbReference>
<dbReference type="Gene3D" id="3.30.70.1250">
    <property type="entry name" value="Phosphopentomutase"/>
    <property type="match status" value="1"/>
</dbReference>
<dbReference type="HAMAP" id="MF_00740">
    <property type="entry name" value="Phosphopentomut"/>
    <property type="match status" value="1"/>
</dbReference>
<dbReference type="InterPro" id="IPR017850">
    <property type="entry name" value="Alkaline_phosphatase_core_sf"/>
</dbReference>
<dbReference type="InterPro" id="IPR010045">
    <property type="entry name" value="DeoB"/>
</dbReference>
<dbReference type="InterPro" id="IPR006124">
    <property type="entry name" value="Metalloenzyme"/>
</dbReference>
<dbReference type="InterPro" id="IPR024052">
    <property type="entry name" value="Phosphopentomutase_DeoB_cap_sf"/>
</dbReference>
<dbReference type="NCBIfam" id="TIGR01696">
    <property type="entry name" value="deoB"/>
    <property type="match status" value="1"/>
</dbReference>
<dbReference type="NCBIfam" id="NF003766">
    <property type="entry name" value="PRK05362.1"/>
    <property type="match status" value="1"/>
</dbReference>
<dbReference type="PANTHER" id="PTHR21110">
    <property type="entry name" value="PHOSPHOPENTOMUTASE"/>
    <property type="match status" value="1"/>
</dbReference>
<dbReference type="PANTHER" id="PTHR21110:SF0">
    <property type="entry name" value="PHOSPHOPENTOMUTASE"/>
    <property type="match status" value="1"/>
</dbReference>
<dbReference type="Pfam" id="PF01676">
    <property type="entry name" value="Metalloenzyme"/>
    <property type="match status" value="1"/>
</dbReference>
<dbReference type="PIRSF" id="PIRSF001491">
    <property type="entry name" value="Ppentomutase"/>
    <property type="match status" value="1"/>
</dbReference>
<dbReference type="SUPFAM" id="SSF53649">
    <property type="entry name" value="Alkaline phosphatase-like"/>
    <property type="match status" value="1"/>
</dbReference>
<dbReference type="SUPFAM" id="SSF143856">
    <property type="entry name" value="DeoB insert domain-like"/>
    <property type="match status" value="1"/>
</dbReference>
<gene>
    <name evidence="1" type="primary">deoB</name>
    <name type="ordered locus">Clos_1592</name>
</gene>
<feature type="chain" id="PRO_1000133057" description="Phosphopentomutase">
    <location>
        <begin position="1"/>
        <end position="390"/>
    </location>
</feature>
<feature type="binding site" evidence="1">
    <location>
        <position position="11"/>
    </location>
    <ligand>
        <name>Mn(2+)</name>
        <dbReference type="ChEBI" id="CHEBI:29035"/>
        <label>1</label>
    </ligand>
</feature>
<feature type="binding site" evidence="1">
    <location>
        <position position="283"/>
    </location>
    <ligand>
        <name>Mn(2+)</name>
        <dbReference type="ChEBI" id="CHEBI:29035"/>
        <label>2</label>
    </ligand>
</feature>
<feature type="binding site" evidence="1">
    <location>
        <position position="288"/>
    </location>
    <ligand>
        <name>Mn(2+)</name>
        <dbReference type="ChEBI" id="CHEBI:29035"/>
        <label>2</label>
    </ligand>
</feature>
<feature type="binding site" evidence="1">
    <location>
        <position position="324"/>
    </location>
    <ligand>
        <name>Mn(2+)</name>
        <dbReference type="ChEBI" id="CHEBI:29035"/>
        <label>1</label>
    </ligand>
</feature>
<feature type="binding site" evidence="1">
    <location>
        <position position="325"/>
    </location>
    <ligand>
        <name>Mn(2+)</name>
        <dbReference type="ChEBI" id="CHEBI:29035"/>
        <label>1</label>
    </ligand>
</feature>
<feature type="binding site" evidence="1">
    <location>
        <position position="336"/>
    </location>
    <ligand>
        <name>Mn(2+)</name>
        <dbReference type="ChEBI" id="CHEBI:29035"/>
        <label>2</label>
    </ligand>
</feature>
<evidence type="ECO:0000255" key="1">
    <source>
        <dbReference type="HAMAP-Rule" id="MF_00740"/>
    </source>
</evidence>
<accession>A8MFH2</accession>
<protein>
    <recommendedName>
        <fullName evidence="1">Phosphopentomutase</fullName>
        <ecNumber evidence="1">5.4.2.7</ecNumber>
    </recommendedName>
    <alternativeName>
        <fullName evidence="1">Phosphodeoxyribomutase</fullName>
    </alternativeName>
</protein>